<protein>
    <recommendedName>
        <fullName>Putative ankyrin repeat protein R835</fullName>
    </recommendedName>
</protein>
<organismHost>
    <name type="scientific">Acanthamoeba polyphaga</name>
    <name type="common">Amoeba</name>
    <dbReference type="NCBI Taxonomy" id="5757"/>
</organismHost>
<proteinExistence type="predicted"/>
<name>YR835_MIMIV</name>
<accession>Q5UQJ0</accession>
<organism>
    <name type="scientific">Acanthamoeba polyphaga mimivirus</name>
    <name type="common">APMV</name>
    <dbReference type="NCBI Taxonomy" id="212035"/>
    <lineage>
        <taxon>Viruses</taxon>
        <taxon>Varidnaviria</taxon>
        <taxon>Bamfordvirae</taxon>
        <taxon>Nucleocytoviricota</taxon>
        <taxon>Megaviricetes</taxon>
        <taxon>Imitervirales</taxon>
        <taxon>Mimiviridae</taxon>
        <taxon>Megamimivirinae</taxon>
        <taxon>Mimivirus</taxon>
        <taxon>Mimivirus bradfordmassiliense</taxon>
    </lineage>
</organism>
<keyword id="KW-0040">ANK repeat</keyword>
<keyword id="KW-1185">Reference proteome</keyword>
<keyword id="KW-0677">Repeat</keyword>
<sequence>MYYASTCMDHEIVEKKYKLGLNVTDNYKVRYNISLISQIFEGRCDYKNVVRLSLPKSLDLYKTGSNHYAYTLEVNMINVEKIYKLDNFEDVKELIDLGADINEAIKNIIIVNNIDSLKYLLEKGANIDLIDSYLAKMGNIDIFEFLFVKKCPMNKFLPIAVEYGHLNLVKFLVEKGVYVDFIDRTKYTFSEYTPLVAACSAGHIKIVEYLIEKGANYKSSYGVYLAAEKGHYDIVKFLIDKGTDLEKYGLRSLNEVIKKGHFDIMKLFINSGLEIDYDYYIYKAGLRGHTDIVKYLVMMQMSKQIQKI</sequence>
<gene>
    <name type="ordered locus">MIMI_R835</name>
</gene>
<reference key="1">
    <citation type="journal article" date="2004" name="Science">
        <title>The 1.2-megabase genome sequence of Mimivirus.</title>
        <authorList>
            <person name="Raoult D."/>
            <person name="Audic S."/>
            <person name="Robert C."/>
            <person name="Abergel C."/>
            <person name="Renesto P."/>
            <person name="Ogata H."/>
            <person name="La Scola B."/>
            <person name="Susan M."/>
            <person name="Claverie J.-M."/>
        </authorList>
    </citation>
    <scope>NUCLEOTIDE SEQUENCE [LARGE SCALE GENOMIC DNA]</scope>
    <source>
        <strain>Rowbotham-Bradford</strain>
    </source>
</reference>
<feature type="chain" id="PRO_0000067206" description="Putative ankyrin repeat protein R835">
    <location>
        <begin position="1"/>
        <end position="308"/>
    </location>
</feature>
<feature type="repeat" description="ANK 1">
    <location>
        <begin position="100"/>
        <end position="129"/>
    </location>
</feature>
<feature type="repeat" description="ANK 2">
    <location>
        <begin position="152"/>
        <end position="181"/>
    </location>
</feature>
<feature type="repeat" description="ANK 3">
    <location>
        <begin position="190"/>
        <end position="217"/>
    </location>
</feature>
<feature type="repeat" description="ANK 4">
    <location>
        <begin position="218"/>
        <end position="247"/>
    </location>
</feature>
<feature type="repeat" description="ANK 5">
    <location>
        <begin position="249"/>
        <end position="277"/>
    </location>
</feature>
<feature type="repeat" description="ANK 6">
    <location>
        <begin position="279"/>
        <end position="305"/>
    </location>
</feature>
<dbReference type="EMBL" id="AY653733">
    <property type="protein sequence ID" value="AAV51093.1"/>
    <property type="molecule type" value="Genomic_DNA"/>
</dbReference>
<dbReference type="SMR" id="Q5UQJ0"/>
<dbReference type="KEGG" id="vg:9925498"/>
<dbReference type="OrthoDB" id="30493at10239"/>
<dbReference type="Proteomes" id="UP000001134">
    <property type="component" value="Genome"/>
</dbReference>
<dbReference type="Gene3D" id="1.25.40.20">
    <property type="entry name" value="Ankyrin repeat-containing domain"/>
    <property type="match status" value="1"/>
</dbReference>
<dbReference type="InterPro" id="IPR052801">
    <property type="entry name" value="Ankyrin-EF-hand"/>
</dbReference>
<dbReference type="InterPro" id="IPR002110">
    <property type="entry name" value="Ankyrin_rpt"/>
</dbReference>
<dbReference type="InterPro" id="IPR036770">
    <property type="entry name" value="Ankyrin_rpt-contain_sf"/>
</dbReference>
<dbReference type="PANTHER" id="PTHR24127">
    <property type="entry name" value="ANKYRIN REPEAT AND EF-HAND DOMAIN-CONTAINING PROTEIN 1"/>
    <property type="match status" value="1"/>
</dbReference>
<dbReference type="PANTHER" id="PTHR24127:SF1">
    <property type="entry name" value="ANKYRIN REPEAT AND EF-HAND DOMAIN-CONTAINING PROTEIN 1"/>
    <property type="match status" value="1"/>
</dbReference>
<dbReference type="Pfam" id="PF12796">
    <property type="entry name" value="Ank_2"/>
    <property type="match status" value="2"/>
</dbReference>
<dbReference type="SMART" id="SM00248">
    <property type="entry name" value="ANK"/>
    <property type="match status" value="5"/>
</dbReference>
<dbReference type="SUPFAM" id="SSF48403">
    <property type="entry name" value="Ankyrin repeat"/>
    <property type="match status" value="1"/>
</dbReference>
<dbReference type="PROSITE" id="PS50297">
    <property type="entry name" value="ANK_REP_REGION"/>
    <property type="match status" value="1"/>
</dbReference>
<dbReference type="PROSITE" id="PS50088">
    <property type="entry name" value="ANK_REPEAT"/>
    <property type="match status" value="3"/>
</dbReference>